<comment type="catalytic activity">
    <reaction evidence="1">
        <text>L-histidinol phosphate + 2-oxoglutarate = 3-(imidazol-4-yl)-2-oxopropyl phosphate + L-glutamate</text>
        <dbReference type="Rhea" id="RHEA:23744"/>
        <dbReference type="ChEBI" id="CHEBI:16810"/>
        <dbReference type="ChEBI" id="CHEBI:29985"/>
        <dbReference type="ChEBI" id="CHEBI:57766"/>
        <dbReference type="ChEBI" id="CHEBI:57980"/>
        <dbReference type="EC" id="2.6.1.9"/>
    </reaction>
</comment>
<comment type="cofactor">
    <cofactor evidence="1">
        <name>pyridoxal 5'-phosphate</name>
        <dbReference type="ChEBI" id="CHEBI:597326"/>
    </cofactor>
</comment>
<comment type="pathway">
    <text evidence="1">Amino-acid biosynthesis; L-histidine biosynthesis; L-histidine from 5-phospho-alpha-D-ribose 1-diphosphate: step 7/9.</text>
</comment>
<comment type="subunit">
    <text evidence="1">Homodimer.</text>
</comment>
<comment type="similarity">
    <text evidence="1">Belongs to the class-II pyridoxal-phosphate-dependent aminotransferase family. Histidinol-phosphate aminotransferase subfamily.</text>
</comment>
<sequence>MSRFWSPFVKDLVPYVPGEQPKLARLVKLNTNENPYGPSPKALEAMRGELNDNLRLYPDPNGDRLKQAVAEYYGVTTGQVFVGNGSDEVLAHIFHGLFQHGGPLLFPDISYSFYPVYCGLYGIPFEPVALDEQFQIRVEDYQKPNAGIIFPNPNAPTGCLLPLQAIEQLLQANRDSVVVVDEAYIDFGGQTAISLVDRYDNLLVTQTLSKSRSLAGLRVGLAVGHPDLIEALERIKNSFNSYPLDRMAIVGAAAAFEDQAYFEATCRKVIDSREALVEQLTAKGFEVLPSAANFIFARHPQEDAAQLAARLREQGVIVRHFKQQRIAQFLRITIGTPEMNQALIDALS</sequence>
<reference key="1">
    <citation type="submission" date="2008-02" db="EMBL/GenBank/DDBJ databases">
        <title>Complete sequence of Pseudomonas putida W619.</title>
        <authorList>
            <person name="Copeland A."/>
            <person name="Lucas S."/>
            <person name="Lapidus A."/>
            <person name="Barry K."/>
            <person name="Detter J.C."/>
            <person name="Glavina del Rio T."/>
            <person name="Dalin E."/>
            <person name="Tice H."/>
            <person name="Pitluck S."/>
            <person name="Chain P."/>
            <person name="Malfatti S."/>
            <person name="Shin M."/>
            <person name="Vergez L."/>
            <person name="Schmutz J."/>
            <person name="Larimer F."/>
            <person name="Land M."/>
            <person name="Hauser L."/>
            <person name="Kyrpides N."/>
            <person name="Kim E."/>
            <person name="Taghavi S."/>
            <person name="Vangronsveld D."/>
            <person name="van der Lelie D."/>
            <person name="Richardson P."/>
        </authorList>
    </citation>
    <scope>NUCLEOTIDE SEQUENCE [LARGE SCALE GENOMIC DNA]</scope>
    <source>
        <strain>W619</strain>
    </source>
</reference>
<protein>
    <recommendedName>
        <fullName evidence="1">Histidinol-phosphate aminotransferase</fullName>
        <ecNumber evidence="1">2.6.1.9</ecNumber>
    </recommendedName>
    <alternativeName>
        <fullName evidence="1">Imidazole acetol-phosphate transaminase</fullName>
    </alternativeName>
</protein>
<dbReference type="EC" id="2.6.1.9" evidence="1"/>
<dbReference type="EMBL" id="CP000949">
    <property type="protein sequence ID" value="ACA74728.1"/>
    <property type="molecule type" value="Genomic_DNA"/>
</dbReference>
<dbReference type="SMR" id="B1JBC0"/>
<dbReference type="STRING" id="390235.PputW619_4248"/>
<dbReference type="KEGG" id="ppw:PputW619_4248"/>
<dbReference type="eggNOG" id="COG0079">
    <property type="taxonomic scope" value="Bacteria"/>
</dbReference>
<dbReference type="HOGENOM" id="CLU_017584_3_0_6"/>
<dbReference type="OrthoDB" id="9809616at2"/>
<dbReference type="UniPathway" id="UPA00031">
    <property type="reaction ID" value="UER00012"/>
</dbReference>
<dbReference type="GO" id="GO:0004400">
    <property type="term" value="F:histidinol-phosphate transaminase activity"/>
    <property type="evidence" value="ECO:0007669"/>
    <property type="project" value="UniProtKB-UniRule"/>
</dbReference>
<dbReference type="GO" id="GO:0030170">
    <property type="term" value="F:pyridoxal phosphate binding"/>
    <property type="evidence" value="ECO:0007669"/>
    <property type="project" value="InterPro"/>
</dbReference>
<dbReference type="GO" id="GO:0000105">
    <property type="term" value="P:L-histidine biosynthetic process"/>
    <property type="evidence" value="ECO:0007669"/>
    <property type="project" value="UniProtKB-UniRule"/>
</dbReference>
<dbReference type="CDD" id="cd00609">
    <property type="entry name" value="AAT_like"/>
    <property type="match status" value="1"/>
</dbReference>
<dbReference type="Gene3D" id="3.90.1150.10">
    <property type="entry name" value="Aspartate Aminotransferase, domain 1"/>
    <property type="match status" value="1"/>
</dbReference>
<dbReference type="Gene3D" id="3.40.640.10">
    <property type="entry name" value="Type I PLP-dependent aspartate aminotransferase-like (Major domain)"/>
    <property type="match status" value="1"/>
</dbReference>
<dbReference type="HAMAP" id="MF_01023">
    <property type="entry name" value="HisC_aminotrans_2"/>
    <property type="match status" value="1"/>
</dbReference>
<dbReference type="InterPro" id="IPR001917">
    <property type="entry name" value="Aminotrans_II_pyridoxalP_BS"/>
</dbReference>
<dbReference type="InterPro" id="IPR004839">
    <property type="entry name" value="Aminotransferase_I/II_large"/>
</dbReference>
<dbReference type="InterPro" id="IPR005861">
    <property type="entry name" value="HisP_aminotrans"/>
</dbReference>
<dbReference type="InterPro" id="IPR050106">
    <property type="entry name" value="HistidinolP_aminotransfase"/>
</dbReference>
<dbReference type="InterPro" id="IPR015424">
    <property type="entry name" value="PyrdxlP-dep_Trfase"/>
</dbReference>
<dbReference type="InterPro" id="IPR015421">
    <property type="entry name" value="PyrdxlP-dep_Trfase_major"/>
</dbReference>
<dbReference type="InterPro" id="IPR015422">
    <property type="entry name" value="PyrdxlP-dep_Trfase_small"/>
</dbReference>
<dbReference type="NCBIfam" id="TIGR01141">
    <property type="entry name" value="hisC"/>
    <property type="match status" value="1"/>
</dbReference>
<dbReference type="PANTHER" id="PTHR43643:SF3">
    <property type="entry name" value="HISTIDINOL-PHOSPHATE AMINOTRANSFERASE"/>
    <property type="match status" value="1"/>
</dbReference>
<dbReference type="PANTHER" id="PTHR43643">
    <property type="entry name" value="HISTIDINOL-PHOSPHATE AMINOTRANSFERASE 2"/>
    <property type="match status" value="1"/>
</dbReference>
<dbReference type="Pfam" id="PF00155">
    <property type="entry name" value="Aminotran_1_2"/>
    <property type="match status" value="1"/>
</dbReference>
<dbReference type="SUPFAM" id="SSF53383">
    <property type="entry name" value="PLP-dependent transferases"/>
    <property type="match status" value="1"/>
</dbReference>
<dbReference type="PROSITE" id="PS00599">
    <property type="entry name" value="AA_TRANSFER_CLASS_2"/>
    <property type="match status" value="1"/>
</dbReference>
<evidence type="ECO:0000255" key="1">
    <source>
        <dbReference type="HAMAP-Rule" id="MF_01023"/>
    </source>
</evidence>
<feature type="chain" id="PRO_1000135413" description="Histidinol-phosphate aminotransferase">
    <location>
        <begin position="1"/>
        <end position="348"/>
    </location>
</feature>
<feature type="modified residue" description="N6-(pyridoxal phosphate)lysine" evidence="1">
    <location>
        <position position="210"/>
    </location>
</feature>
<gene>
    <name evidence="1" type="primary">hisC</name>
    <name type="ordered locus">PputW619_4248</name>
</gene>
<keyword id="KW-0028">Amino-acid biosynthesis</keyword>
<keyword id="KW-0032">Aminotransferase</keyword>
<keyword id="KW-0368">Histidine biosynthesis</keyword>
<keyword id="KW-0663">Pyridoxal phosphate</keyword>
<keyword id="KW-0808">Transferase</keyword>
<organism>
    <name type="scientific">Pseudomonas putida (strain W619)</name>
    <dbReference type="NCBI Taxonomy" id="390235"/>
    <lineage>
        <taxon>Bacteria</taxon>
        <taxon>Pseudomonadati</taxon>
        <taxon>Pseudomonadota</taxon>
        <taxon>Gammaproteobacteria</taxon>
        <taxon>Pseudomonadales</taxon>
        <taxon>Pseudomonadaceae</taxon>
        <taxon>Pseudomonas</taxon>
    </lineage>
</organism>
<name>HIS8_PSEPW</name>
<accession>B1JBC0</accession>
<proteinExistence type="inferred from homology"/>